<protein>
    <recommendedName>
        <fullName evidence="1">Small ribosomal subunit protein uS11m</fullName>
    </recommendedName>
    <alternativeName>
        <fullName>Ribosomal protein S11, mitochondrial</fullName>
    </alternativeName>
</protein>
<dbReference type="EMBL" id="U12386">
    <property type="protein sequence ID" value="AAD11849.1"/>
    <property type="molecule type" value="Genomic_DNA"/>
</dbReference>
<dbReference type="PIR" id="S53857">
    <property type="entry name" value="S53857"/>
</dbReference>
<dbReference type="RefSeq" id="NP_042556.1">
    <property type="nucleotide sequence ID" value="NC_001637.1"/>
</dbReference>
<dbReference type="GeneID" id="1734053"/>
<dbReference type="GO" id="GO:0005739">
    <property type="term" value="C:mitochondrion"/>
    <property type="evidence" value="ECO:0007669"/>
    <property type="project" value="UniProtKB-SubCell"/>
</dbReference>
<dbReference type="GO" id="GO:1990904">
    <property type="term" value="C:ribonucleoprotein complex"/>
    <property type="evidence" value="ECO:0007669"/>
    <property type="project" value="UniProtKB-KW"/>
</dbReference>
<dbReference type="GO" id="GO:0005840">
    <property type="term" value="C:ribosome"/>
    <property type="evidence" value="ECO:0007669"/>
    <property type="project" value="UniProtKB-KW"/>
</dbReference>
<dbReference type="GO" id="GO:0003735">
    <property type="term" value="F:structural constituent of ribosome"/>
    <property type="evidence" value="ECO:0007669"/>
    <property type="project" value="InterPro"/>
</dbReference>
<dbReference type="GO" id="GO:0006412">
    <property type="term" value="P:translation"/>
    <property type="evidence" value="ECO:0007669"/>
    <property type="project" value="InterPro"/>
</dbReference>
<dbReference type="Gene3D" id="3.30.420.80">
    <property type="entry name" value="Ribosomal protein S11"/>
    <property type="match status" value="1"/>
</dbReference>
<dbReference type="HAMAP" id="MF_01310">
    <property type="entry name" value="Ribosomal_uS11"/>
    <property type="match status" value="1"/>
</dbReference>
<dbReference type="InterPro" id="IPR001971">
    <property type="entry name" value="Ribosomal_uS11"/>
</dbReference>
<dbReference type="InterPro" id="IPR036967">
    <property type="entry name" value="Ribosomal_uS11_sf"/>
</dbReference>
<dbReference type="Pfam" id="PF00411">
    <property type="entry name" value="Ribosomal_S11"/>
    <property type="match status" value="1"/>
</dbReference>
<dbReference type="SUPFAM" id="SSF53137">
    <property type="entry name" value="Translational machinery components"/>
    <property type="match status" value="1"/>
</dbReference>
<gene>
    <name type="primary">RPS11</name>
</gene>
<feature type="chain" id="PRO_0000123334" description="Small ribosomal subunit protein uS11m">
    <location>
        <begin position="1"/>
        <end position="173"/>
    </location>
</feature>
<keyword id="KW-0496">Mitochondrion</keyword>
<keyword id="KW-0687">Ribonucleoprotein</keyword>
<keyword id="KW-0689">Ribosomal protein</keyword>
<name>RT11_ACACA</name>
<accession>P46758</accession>
<geneLocation type="mitochondrion"/>
<proteinExistence type="inferred from homology"/>
<reference key="1">
    <citation type="journal article" date="1995" name="J. Mol. Biol.">
        <title>The mitochondrial DNA of the amoeboid protozoon, Acanthamoeba castellanii: complete sequence, gene content and genome organization.</title>
        <authorList>
            <person name="Burger G."/>
            <person name="Plante I."/>
            <person name="Lonergan K.M."/>
            <person name="Gray M.W."/>
        </authorList>
    </citation>
    <scope>NUCLEOTIDE SEQUENCE [GENOMIC DNA]</scope>
    <source>
        <strain>ATCC 30010 / Neff</strain>
    </source>
</reference>
<organism>
    <name type="scientific">Acanthamoeba castellanii</name>
    <name type="common">Amoeba</name>
    <dbReference type="NCBI Taxonomy" id="5755"/>
    <lineage>
        <taxon>Eukaryota</taxon>
        <taxon>Amoebozoa</taxon>
        <taxon>Discosea</taxon>
        <taxon>Longamoebia</taxon>
        <taxon>Centramoebida</taxon>
        <taxon>Acanthamoebidae</taxon>
        <taxon>Acanthamoeba</taxon>
    </lineage>
</organism>
<evidence type="ECO:0000305" key="1"/>
<comment type="subcellular location">
    <subcellularLocation>
        <location>Mitochondrion</location>
    </subcellularLocation>
</comment>
<comment type="similarity">
    <text evidence="1">Belongs to the universal ribosomal protein uS11 family.</text>
</comment>
<sequence length="173" mass="20102">MKILKPITFRKPRIISQKKVLRSKLSKVKKSPWYKAKKNYVSFRQRLVLAKKNPNKKRYYLFFSKKRNNVFLTITDVIGRVVVSQSAGSCKITTKKKKRSPDTLKTVSASVAKIARAKNIKYLFKFFMNTNQTKIGKTIFESFKKTGLFILQGVVVKNKSHGLLMRKKKAKRL</sequence>